<keyword id="KW-0963">Cytoplasm</keyword>
<keyword id="KW-0671">Queuosine biosynthesis</keyword>
<keyword id="KW-1185">Reference proteome</keyword>
<keyword id="KW-0949">S-adenosyl-L-methionine</keyword>
<keyword id="KW-0808">Transferase</keyword>
<dbReference type="EC" id="2.4.99.17" evidence="1"/>
<dbReference type="EMBL" id="AE008922">
    <property type="protein sequence ID" value="AAM41657.1"/>
    <property type="molecule type" value="Genomic_DNA"/>
</dbReference>
<dbReference type="RefSeq" id="NP_637733.1">
    <property type="nucleotide sequence ID" value="NC_003902.1"/>
</dbReference>
<dbReference type="RefSeq" id="WP_011037521.1">
    <property type="nucleotide sequence ID" value="NC_003902.1"/>
</dbReference>
<dbReference type="SMR" id="Q8P867"/>
<dbReference type="STRING" id="190485.XCC2379"/>
<dbReference type="EnsemblBacteria" id="AAM41657">
    <property type="protein sequence ID" value="AAM41657"/>
    <property type="gene ID" value="XCC2379"/>
</dbReference>
<dbReference type="KEGG" id="xcc:XCC2379"/>
<dbReference type="PATRIC" id="fig|190485.4.peg.2533"/>
<dbReference type="eggNOG" id="COG0809">
    <property type="taxonomic scope" value="Bacteria"/>
</dbReference>
<dbReference type="HOGENOM" id="CLU_039110_1_0_6"/>
<dbReference type="OrthoDB" id="9805933at2"/>
<dbReference type="UniPathway" id="UPA00392"/>
<dbReference type="Proteomes" id="UP000001010">
    <property type="component" value="Chromosome"/>
</dbReference>
<dbReference type="GO" id="GO:0005737">
    <property type="term" value="C:cytoplasm"/>
    <property type="evidence" value="ECO:0007669"/>
    <property type="project" value="UniProtKB-SubCell"/>
</dbReference>
<dbReference type="GO" id="GO:0051075">
    <property type="term" value="F:S-adenosylmethionine:tRNA ribosyltransferase-isomerase activity"/>
    <property type="evidence" value="ECO:0000318"/>
    <property type="project" value="GO_Central"/>
</dbReference>
<dbReference type="GO" id="GO:0008616">
    <property type="term" value="P:queuosine biosynthetic process"/>
    <property type="evidence" value="ECO:0000318"/>
    <property type="project" value="GO_Central"/>
</dbReference>
<dbReference type="GO" id="GO:0002099">
    <property type="term" value="P:tRNA wobble guanine modification"/>
    <property type="evidence" value="ECO:0000318"/>
    <property type="project" value="GO_Central"/>
</dbReference>
<dbReference type="FunFam" id="2.40.10.240:FF:000003">
    <property type="entry name" value="S-adenosylmethionine:tRNA ribosyltransferase-isomerase"/>
    <property type="match status" value="1"/>
</dbReference>
<dbReference type="FunFam" id="3.40.1780.10:FF:000001">
    <property type="entry name" value="S-adenosylmethionine:tRNA ribosyltransferase-isomerase"/>
    <property type="match status" value="1"/>
</dbReference>
<dbReference type="Gene3D" id="2.40.10.240">
    <property type="entry name" value="QueA-like"/>
    <property type="match status" value="1"/>
</dbReference>
<dbReference type="Gene3D" id="3.40.1780.10">
    <property type="entry name" value="QueA-like"/>
    <property type="match status" value="1"/>
</dbReference>
<dbReference type="HAMAP" id="MF_00113">
    <property type="entry name" value="QueA"/>
    <property type="match status" value="1"/>
</dbReference>
<dbReference type="InterPro" id="IPR003699">
    <property type="entry name" value="QueA"/>
</dbReference>
<dbReference type="InterPro" id="IPR042118">
    <property type="entry name" value="QueA_dom1"/>
</dbReference>
<dbReference type="InterPro" id="IPR042119">
    <property type="entry name" value="QueA_dom2"/>
</dbReference>
<dbReference type="InterPro" id="IPR036100">
    <property type="entry name" value="QueA_sf"/>
</dbReference>
<dbReference type="NCBIfam" id="NF001140">
    <property type="entry name" value="PRK00147.1"/>
    <property type="match status" value="1"/>
</dbReference>
<dbReference type="NCBIfam" id="TIGR00113">
    <property type="entry name" value="queA"/>
    <property type="match status" value="1"/>
</dbReference>
<dbReference type="PANTHER" id="PTHR30307">
    <property type="entry name" value="S-ADENOSYLMETHIONINE:TRNA RIBOSYLTRANSFERASE-ISOMERASE"/>
    <property type="match status" value="1"/>
</dbReference>
<dbReference type="PANTHER" id="PTHR30307:SF0">
    <property type="entry name" value="S-ADENOSYLMETHIONINE:TRNA RIBOSYLTRANSFERASE-ISOMERASE"/>
    <property type="match status" value="1"/>
</dbReference>
<dbReference type="Pfam" id="PF02547">
    <property type="entry name" value="Queuosine_synth"/>
    <property type="match status" value="1"/>
</dbReference>
<dbReference type="SUPFAM" id="SSF111337">
    <property type="entry name" value="QueA-like"/>
    <property type="match status" value="1"/>
</dbReference>
<gene>
    <name evidence="1" type="primary">queA</name>
    <name type="ordered locus">XCC2379</name>
</gene>
<evidence type="ECO:0000255" key="1">
    <source>
        <dbReference type="HAMAP-Rule" id="MF_00113"/>
    </source>
</evidence>
<accession>Q8P867</accession>
<organism>
    <name type="scientific">Xanthomonas campestris pv. campestris (strain ATCC 33913 / DSM 3586 / NCPPB 528 / LMG 568 / P 25)</name>
    <dbReference type="NCBI Taxonomy" id="190485"/>
    <lineage>
        <taxon>Bacteria</taxon>
        <taxon>Pseudomonadati</taxon>
        <taxon>Pseudomonadota</taxon>
        <taxon>Gammaproteobacteria</taxon>
        <taxon>Lysobacterales</taxon>
        <taxon>Lysobacteraceae</taxon>
        <taxon>Xanthomonas</taxon>
    </lineage>
</organism>
<sequence>MKKSDFHYDLPEELIAQAPLAERAASRLLVVPPTPAAFSDRQVRDLPELLQPGDLLIFNDTRVIPARLFGQKASGGRVEILIERLLGGQQARAQIGASKSPKAGSVIALDAGGQAEVLGRDGEFYLLRFDIPAPLEHWLLDAGRLPLPPYIRREPGLDDRERYQTVFAREVGAVAAPTAGLHFDEALLARLRERGVEFGHVTLHVGAGTFQPVRVDALDKHVMHTEWLNVGAALVEQVRRTRARGGRVIAVGTTVVRSLESAWRKTDDAPHGELQSFAGETQIFILPGYRIRSVDAMVTNFHLPESTLLMMVSAFAGCDRIFAAYAHAIAQRYRFFSYGDAMLLWSREWGIGNGES</sequence>
<proteinExistence type="inferred from homology"/>
<comment type="function">
    <text evidence="1">Transfers and isomerizes the ribose moiety from AdoMet to the 7-aminomethyl group of 7-deazaguanine (preQ1-tRNA) to give epoxyqueuosine (oQ-tRNA).</text>
</comment>
<comment type="catalytic activity">
    <reaction evidence="1">
        <text>7-aminomethyl-7-carbaguanosine(34) in tRNA + S-adenosyl-L-methionine = epoxyqueuosine(34) in tRNA + adenine + L-methionine + 2 H(+)</text>
        <dbReference type="Rhea" id="RHEA:32155"/>
        <dbReference type="Rhea" id="RHEA-COMP:10342"/>
        <dbReference type="Rhea" id="RHEA-COMP:18582"/>
        <dbReference type="ChEBI" id="CHEBI:15378"/>
        <dbReference type="ChEBI" id="CHEBI:16708"/>
        <dbReference type="ChEBI" id="CHEBI:57844"/>
        <dbReference type="ChEBI" id="CHEBI:59789"/>
        <dbReference type="ChEBI" id="CHEBI:82833"/>
        <dbReference type="ChEBI" id="CHEBI:194443"/>
        <dbReference type="EC" id="2.4.99.17"/>
    </reaction>
</comment>
<comment type="pathway">
    <text evidence="1">tRNA modification; tRNA-queuosine biosynthesis.</text>
</comment>
<comment type="subunit">
    <text evidence="1">Monomer.</text>
</comment>
<comment type="subcellular location">
    <subcellularLocation>
        <location evidence="1">Cytoplasm</location>
    </subcellularLocation>
</comment>
<comment type="similarity">
    <text evidence="1">Belongs to the QueA family.</text>
</comment>
<feature type="chain" id="PRO_0000165465" description="S-adenosylmethionine:tRNA ribosyltransferase-isomerase">
    <location>
        <begin position="1"/>
        <end position="356"/>
    </location>
</feature>
<protein>
    <recommendedName>
        <fullName evidence="1">S-adenosylmethionine:tRNA ribosyltransferase-isomerase</fullName>
        <ecNumber evidence="1">2.4.99.17</ecNumber>
    </recommendedName>
    <alternativeName>
        <fullName evidence="1">Queuosine biosynthesis protein QueA</fullName>
    </alternativeName>
</protein>
<name>QUEA_XANCP</name>
<reference key="1">
    <citation type="journal article" date="2002" name="Nature">
        <title>Comparison of the genomes of two Xanthomonas pathogens with differing host specificities.</title>
        <authorList>
            <person name="da Silva A.C.R."/>
            <person name="Ferro J.A."/>
            <person name="Reinach F.C."/>
            <person name="Farah C.S."/>
            <person name="Furlan L.R."/>
            <person name="Quaggio R.B."/>
            <person name="Monteiro-Vitorello C.B."/>
            <person name="Van Sluys M.A."/>
            <person name="Almeida N.F. Jr."/>
            <person name="Alves L.M.C."/>
            <person name="do Amaral A.M."/>
            <person name="Bertolini M.C."/>
            <person name="Camargo L.E.A."/>
            <person name="Camarotte G."/>
            <person name="Cannavan F."/>
            <person name="Cardozo J."/>
            <person name="Chambergo F."/>
            <person name="Ciapina L.P."/>
            <person name="Cicarelli R.M.B."/>
            <person name="Coutinho L.L."/>
            <person name="Cursino-Santos J.R."/>
            <person name="El-Dorry H."/>
            <person name="Faria J.B."/>
            <person name="Ferreira A.J.S."/>
            <person name="Ferreira R.C.C."/>
            <person name="Ferro M.I.T."/>
            <person name="Formighieri E.F."/>
            <person name="Franco M.C."/>
            <person name="Greggio C.C."/>
            <person name="Gruber A."/>
            <person name="Katsuyama A.M."/>
            <person name="Kishi L.T."/>
            <person name="Leite R.P."/>
            <person name="Lemos E.G.M."/>
            <person name="Lemos M.V.F."/>
            <person name="Locali E.C."/>
            <person name="Machado M.A."/>
            <person name="Madeira A.M.B.N."/>
            <person name="Martinez-Rossi N.M."/>
            <person name="Martins E.C."/>
            <person name="Meidanis J."/>
            <person name="Menck C.F.M."/>
            <person name="Miyaki C.Y."/>
            <person name="Moon D.H."/>
            <person name="Moreira L.M."/>
            <person name="Novo M.T.M."/>
            <person name="Okura V.K."/>
            <person name="Oliveira M.C."/>
            <person name="Oliveira V.R."/>
            <person name="Pereira H.A."/>
            <person name="Rossi A."/>
            <person name="Sena J.A.D."/>
            <person name="Silva C."/>
            <person name="de Souza R.F."/>
            <person name="Spinola L.A.F."/>
            <person name="Takita M.A."/>
            <person name="Tamura R.E."/>
            <person name="Teixeira E.C."/>
            <person name="Tezza R.I.D."/>
            <person name="Trindade dos Santos M."/>
            <person name="Truffi D."/>
            <person name="Tsai S.M."/>
            <person name="White F.F."/>
            <person name="Setubal J.C."/>
            <person name="Kitajima J.P."/>
        </authorList>
    </citation>
    <scope>NUCLEOTIDE SEQUENCE [LARGE SCALE GENOMIC DNA]</scope>
    <source>
        <strain>ATCC 33913 / DSM 3586 / NCPPB 528 / LMG 568 / P 25</strain>
    </source>
</reference>